<dbReference type="EC" id="2.8.1.4" evidence="1"/>
<dbReference type="EMBL" id="CP000673">
    <property type="protein sequence ID" value="EDK32870.1"/>
    <property type="molecule type" value="Genomic_DNA"/>
</dbReference>
<dbReference type="RefSeq" id="WP_011989385.1">
    <property type="nucleotide sequence ID" value="NC_009706.1"/>
</dbReference>
<dbReference type="SMR" id="A5N6D9"/>
<dbReference type="STRING" id="431943.CKL_0817"/>
<dbReference type="KEGG" id="ckl:CKL_0817"/>
<dbReference type="eggNOG" id="COG0301">
    <property type="taxonomic scope" value="Bacteria"/>
</dbReference>
<dbReference type="HOGENOM" id="CLU_037952_4_0_9"/>
<dbReference type="UniPathway" id="UPA00060"/>
<dbReference type="Proteomes" id="UP000002411">
    <property type="component" value="Chromosome"/>
</dbReference>
<dbReference type="GO" id="GO:0005829">
    <property type="term" value="C:cytosol"/>
    <property type="evidence" value="ECO:0007669"/>
    <property type="project" value="TreeGrafter"/>
</dbReference>
<dbReference type="GO" id="GO:0005524">
    <property type="term" value="F:ATP binding"/>
    <property type="evidence" value="ECO:0007669"/>
    <property type="project" value="UniProtKB-UniRule"/>
</dbReference>
<dbReference type="GO" id="GO:0004810">
    <property type="term" value="F:CCA tRNA nucleotidyltransferase activity"/>
    <property type="evidence" value="ECO:0007669"/>
    <property type="project" value="InterPro"/>
</dbReference>
<dbReference type="GO" id="GO:0000049">
    <property type="term" value="F:tRNA binding"/>
    <property type="evidence" value="ECO:0007669"/>
    <property type="project" value="UniProtKB-UniRule"/>
</dbReference>
<dbReference type="GO" id="GO:0140741">
    <property type="term" value="F:tRNA-uracil-4 sulfurtransferase activity"/>
    <property type="evidence" value="ECO:0007669"/>
    <property type="project" value="UniProtKB-EC"/>
</dbReference>
<dbReference type="GO" id="GO:0009228">
    <property type="term" value="P:thiamine biosynthetic process"/>
    <property type="evidence" value="ECO:0007669"/>
    <property type="project" value="UniProtKB-KW"/>
</dbReference>
<dbReference type="GO" id="GO:0009229">
    <property type="term" value="P:thiamine diphosphate biosynthetic process"/>
    <property type="evidence" value="ECO:0007669"/>
    <property type="project" value="UniProtKB-UniRule"/>
</dbReference>
<dbReference type="GO" id="GO:0052837">
    <property type="term" value="P:thiazole biosynthetic process"/>
    <property type="evidence" value="ECO:0007669"/>
    <property type="project" value="TreeGrafter"/>
</dbReference>
<dbReference type="GO" id="GO:0002937">
    <property type="term" value="P:tRNA 4-thiouridine biosynthesis"/>
    <property type="evidence" value="ECO:0007669"/>
    <property type="project" value="TreeGrafter"/>
</dbReference>
<dbReference type="CDD" id="cd01712">
    <property type="entry name" value="PPase_ThiI"/>
    <property type="match status" value="1"/>
</dbReference>
<dbReference type="CDD" id="cd11716">
    <property type="entry name" value="THUMP_ThiI"/>
    <property type="match status" value="1"/>
</dbReference>
<dbReference type="FunFam" id="3.40.50.620:FF:000053">
    <property type="entry name" value="Probable tRNA sulfurtransferase"/>
    <property type="match status" value="1"/>
</dbReference>
<dbReference type="Gene3D" id="3.30.2130.30">
    <property type="match status" value="1"/>
</dbReference>
<dbReference type="Gene3D" id="3.40.50.620">
    <property type="entry name" value="HUPs"/>
    <property type="match status" value="1"/>
</dbReference>
<dbReference type="HAMAP" id="MF_00021">
    <property type="entry name" value="ThiI"/>
    <property type="match status" value="1"/>
</dbReference>
<dbReference type="InterPro" id="IPR014729">
    <property type="entry name" value="Rossmann-like_a/b/a_fold"/>
</dbReference>
<dbReference type="InterPro" id="IPR020536">
    <property type="entry name" value="ThiI_AANH"/>
</dbReference>
<dbReference type="InterPro" id="IPR054173">
    <property type="entry name" value="ThiI_fer"/>
</dbReference>
<dbReference type="InterPro" id="IPR049961">
    <property type="entry name" value="ThiI_N"/>
</dbReference>
<dbReference type="InterPro" id="IPR004114">
    <property type="entry name" value="THUMP_dom"/>
</dbReference>
<dbReference type="InterPro" id="IPR049962">
    <property type="entry name" value="THUMP_ThiI"/>
</dbReference>
<dbReference type="InterPro" id="IPR003720">
    <property type="entry name" value="tRNA_STrfase"/>
</dbReference>
<dbReference type="InterPro" id="IPR050102">
    <property type="entry name" value="tRNA_sulfurtransferase_ThiI"/>
</dbReference>
<dbReference type="NCBIfam" id="TIGR00342">
    <property type="entry name" value="tRNA uracil 4-sulfurtransferase ThiI"/>
    <property type="match status" value="1"/>
</dbReference>
<dbReference type="PANTHER" id="PTHR43209">
    <property type="entry name" value="TRNA SULFURTRANSFERASE"/>
    <property type="match status" value="1"/>
</dbReference>
<dbReference type="PANTHER" id="PTHR43209:SF1">
    <property type="entry name" value="TRNA SULFURTRANSFERASE"/>
    <property type="match status" value="1"/>
</dbReference>
<dbReference type="Pfam" id="PF02568">
    <property type="entry name" value="ThiI"/>
    <property type="match status" value="1"/>
</dbReference>
<dbReference type="Pfam" id="PF22025">
    <property type="entry name" value="ThiI_fer"/>
    <property type="match status" value="1"/>
</dbReference>
<dbReference type="Pfam" id="PF02926">
    <property type="entry name" value="THUMP"/>
    <property type="match status" value="1"/>
</dbReference>
<dbReference type="SMART" id="SM00981">
    <property type="entry name" value="THUMP"/>
    <property type="match status" value="1"/>
</dbReference>
<dbReference type="SUPFAM" id="SSF52402">
    <property type="entry name" value="Adenine nucleotide alpha hydrolases-like"/>
    <property type="match status" value="1"/>
</dbReference>
<dbReference type="SUPFAM" id="SSF143437">
    <property type="entry name" value="THUMP domain-like"/>
    <property type="match status" value="1"/>
</dbReference>
<dbReference type="PROSITE" id="PS51165">
    <property type="entry name" value="THUMP"/>
    <property type="match status" value="1"/>
</dbReference>
<comment type="function">
    <text evidence="1">Catalyzes the ATP-dependent transfer of a sulfur to tRNA to produce 4-thiouridine in position 8 of tRNAs, which functions as a near-UV photosensor. Also catalyzes the transfer of sulfur to the sulfur carrier protein ThiS, forming ThiS-thiocarboxylate. This is a step in the synthesis of thiazole, in the thiamine biosynthesis pathway. The sulfur is donated as persulfide by IscS.</text>
</comment>
<comment type="catalytic activity">
    <reaction evidence="1">
        <text>[ThiI sulfur-carrier protein]-S-sulfanyl-L-cysteine + a uridine in tRNA + 2 reduced [2Fe-2S]-[ferredoxin] + ATP + H(+) = [ThiI sulfur-carrier protein]-L-cysteine + a 4-thiouridine in tRNA + 2 oxidized [2Fe-2S]-[ferredoxin] + AMP + diphosphate</text>
        <dbReference type="Rhea" id="RHEA:24176"/>
        <dbReference type="Rhea" id="RHEA-COMP:10000"/>
        <dbReference type="Rhea" id="RHEA-COMP:10001"/>
        <dbReference type="Rhea" id="RHEA-COMP:13337"/>
        <dbReference type="Rhea" id="RHEA-COMP:13338"/>
        <dbReference type="Rhea" id="RHEA-COMP:13339"/>
        <dbReference type="Rhea" id="RHEA-COMP:13340"/>
        <dbReference type="ChEBI" id="CHEBI:15378"/>
        <dbReference type="ChEBI" id="CHEBI:29950"/>
        <dbReference type="ChEBI" id="CHEBI:30616"/>
        <dbReference type="ChEBI" id="CHEBI:33019"/>
        <dbReference type="ChEBI" id="CHEBI:33737"/>
        <dbReference type="ChEBI" id="CHEBI:33738"/>
        <dbReference type="ChEBI" id="CHEBI:61963"/>
        <dbReference type="ChEBI" id="CHEBI:65315"/>
        <dbReference type="ChEBI" id="CHEBI:136798"/>
        <dbReference type="ChEBI" id="CHEBI:456215"/>
        <dbReference type="EC" id="2.8.1.4"/>
    </reaction>
</comment>
<comment type="catalytic activity">
    <reaction evidence="1">
        <text>[ThiS sulfur-carrier protein]-C-terminal Gly-Gly-AMP + S-sulfanyl-L-cysteinyl-[cysteine desulfurase] + AH2 = [ThiS sulfur-carrier protein]-C-terminal-Gly-aminoethanethioate + L-cysteinyl-[cysteine desulfurase] + A + AMP + 2 H(+)</text>
        <dbReference type="Rhea" id="RHEA:43340"/>
        <dbReference type="Rhea" id="RHEA-COMP:12157"/>
        <dbReference type="Rhea" id="RHEA-COMP:12158"/>
        <dbReference type="Rhea" id="RHEA-COMP:12910"/>
        <dbReference type="Rhea" id="RHEA-COMP:19908"/>
        <dbReference type="ChEBI" id="CHEBI:13193"/>
        <dbReference type="ChEBI" id="CHEBI:15378"/>
        <dbReference type="ChEBI" id="CHEBI:17499"/>
        <dbReference type="ChEBI" id="CHEBI:29950"/>
        <dbReference type="ChEBI" id="CHEBI:61963"/>
        <dbReference type="ChEBI" id="CHEBI:90618"/>
        <dbReference type="ChEBI" id="CHEBI:232372"/>
        <dbReference type="ChEBI" id="CHEBI:456215"/>
    </reaction>
</comment>
<comment type="pathway">
    <text evidence="1">Cofactor biosynthesis; thiamine diphosphate biosynthesis.</text>
</comment>
<comment type="subcellular location">
    <subcellularLocation>
        <location evidence="1">Cytoplasm</location>
    </subcellularLocation>
</comment>
<comment type="similarity">
    <text evidence="1">Belongs to the ThiI family.</text>
</comment>
<feature type="chain" id="PRO_1000074213" description="Probable tRNA sulfurtransferase">
    <location>
        <begin position="1"/>
        <end position="381"/>
    </location>
</feature>
<feature type="domain" description="THUMP" evidence="1">
    <location>
        <begin position="57"/>
        <end position="160"/>
    </location>
</feature>
<feature type="binding site" evidence="1">
    <location>
        <begin position="177"/>
        <end position="178"/>
    </location>
    <ligand>
        <name>ATP</name>
        <dbReference type="ChEBI" id="CHEBI:30616"/>
    </ligand>
</feature>
<feature type="binding site" evidence="1">
    <location>
        <begin position="202"/>
        <end position="203"/>
    </location>
    <ligand>
        <name>ATP</name>
        <dbReference type="ChEBI" id="CHEBI:30616"/>
    </ligand>
</feature>
<feature type="binding site" evidence="1">
    <location>
        <position position="259"/>
    </location>
    <ligand>
        <name>ATP</name>
        <dbReference type="ChEBI" id="CHEBI:30616"/>
    </ligand>
</feature>
<feature type="binding site" evidence="1">
    <location>
        <position position="281"/>
    </location>
    <ligand>
        <name>ATP</name>
        <dbReference type="ChEBI" id="CHEBI:30616"/>
    </ligand>
</feature>
<feature type="binding site" evidence="1">
    <location>
        <position position="290"/>
    </location>
    <ligand>
        <name>ATP</name>
        <dbReference type="ChEBI" id="CHEBI:30616"/>
    </ligand>
</feature>
<accession>A5N6D9</accession>
<evidence type="ECO:0000255" key="1">
    <source>
        <dbReference type="HAMAP-Rule" id="MF_00021"/>
    </source>
</evidence>
<sequence>MKRLLLVKYASEIFLKGLNKGKFEKKLKDNIKNILKDVQYNFVMDQGRWFIECSDIEKGIEKLKSVFGVWEICVVDEVEADMEKIKEQSLKNALESKGSTFKVLTKRADKSFPGTSMEVSREIGAYILQNVPNLSVDIKNPDFFVNIEIRNKAYVYSKKIKAVGGMPYGTNGNTLLMLSGGIDSPVAGYMMARRGVQLNCIYFHSHPYTSERAKEKVKELAGILKGYTGNINLYITPFTEIQMQIIEKCRKDELTIIMRRFMMRIACIIADKYNINSVTTGESIGQVASQTMEGLVVSNQAADRPVFRPLIAMDKVDIMEVAREIGTYETSILPYEDCCTIFVPKHPKTKPRLQEIIKSEENLDIDVLVEEAVCDTEFLSI</sequence>
<gene>
    <name evidence="1" type="primary">thiI</name>
    <name type="ordered locus">CKL_0817</name>
</gene>
<proteinExistence type="inferred from homology"/>
<protein>
    <recommendedName>
        <fullName evidence="1">Probable tRNA sulfurtransferase</fullName>
        <ecNumber evidence="1">2.8.1.4</ecNumber>
    </recommendedName>
    <alternativeName>
        <fullName evidence="1">Sulfur carrier protein ThiS sulfurtransferase</fullName>
    </alternativeName>
    <alternativeName>
        <fullName evidence="1">Thiamine biosynthesis protein ThiI</fullName>
    </alternativeName>
    <alternativeName>
        <fullName evidence="1">tRNA 4-thiouridine synthase</fullName>
    </alternativeName>
</protein>
<organism>
    <name type="scientific">Clostridium kluyveri (strain ATCC 8527 / DSM 555 / NBRC 12016 / NCIMB 10680 / K1)</name>
    <dbReference type="NCBI Taxonomy" id="431943"/>
    <lineage>
        <taxon>Bacteria</taxon>
        <taxon>Bacillati</taxon>
        <taxon>Bacillota</taxon>
        <taxon>Clostridia</taxon>
        <taxon>Eubacteriales</taxon>
        <taxon>Clostridiaceae</taxon>
        <taxon>Clostridium</taxon>
    </lineage>
</organism>
<reference key="1">
    <citation type="journal article" date="2008" name="Proc. Natl. Acad. Sci. U.S.A.">
        <title>The genome of Clostridium kluyveri, a strict anaerobe with unique metabolic features.</title>
        <authorList>
            <person name="Seedorf H."/>
            <person name="Fricke W.F."/>
            <person name="Veith B."/>
            <person name="Brueggemann H."/>
            <person name="Liesegang H."/>
            <person name="Strittmatter A."/>
            <person name="Miethke M."/>
            <person name="Buckel W."/>
            <person name="Hinderberger J."/>
            <person name="Li F."/>
            <person name="Hagemeier C."/>
            <person name="Thauer R.K."/>
            <person name="Gottschalk G."/>
        </authorList>
    </citation>
    <scope>NUCLEOTIDE SEQUENCE [LARGE SCALE GENOMIC DNA]</scope>
    <source>
        <strain>ATCC 8527 / DSM 555 / NBRC 12016 / NCIMB 10680 / K1</strain>
    </source>
</reference>
<keyword id="KW-0067">ATP-binding</keyword>
<keyword id="KW-0963">Cytoplasm</keyword>
<keyword id="KW-0547">Nucleotide-binding</keyword>
<keyword id="KW-1185">Reference proteome</keyword>
<keyword id="KW-0694">RNA-binding</keyword>
<keyword id="KW-0784">Thiamine biosynthesis</keyword>
<keyword id="KW-0808">Transferase</keyword>
<keyword id="KW-0820">tRNA-binding</keyword>
<name>THII_CLOK5</name>